<proteinExistence type="inferred from homology"/>
<comment type="function">
    <text evidence="1">Endoribonuclease that initiates mRNA decay.</text>
</comment>
<comment type="subcellular location">
    <subcellularLocation>
        <location evidence="1">Cell membrane</location>
        <topology evidence="1">Single-pass membrane protein</topology>
    </subcellularLocation>
</comment>
<comment type="similarity">
    <text evidence="1">Belongs to the RNase Y family.</text>
</comment>
<reference key="1">
    <citation type="submission" date="2007-10" db="EMBL/GenBank/DDBJ databases">
        <title>Complete genome of Alkaliphilus oremlandii OhILAs.</title>
        <authorList>
            <person name="Copeland A."/>
            <person name="Lucas S."/>
            <person name="Lapidus A."/>
            <person name="Barry K."/>
            <person name="Detter J.C."/>
            <person name="Glavina del Rio T."/>
            <person name="Hammon N."/>
            <person name="Israni S."/>
            <person name="Dalin E."/>
            <person name="Tice H."/>
            <person name="Pitluck S."/>
            <person name="Chain P."/>
            <person name="Malfatti S."/>
            <person name="Shin M."/>
            <person name="Vergez L."/>
            <person name="Schmutz J."/>
            <person name="Larimer F."/>
            <person name="Land M."/>
            <person name="Hauser L."/>
            <person name="Kyrpides N."/>
            <person name="Mikhailova N."/>
            <person name="Stolz J.F."/>
            <person name="Dawson A."/>
            <person name="Fisher E."/>
            <person name="Crable B."/>
            <person name="Perera E."/>
            <person name="Lisak J."/>
            <person name="Ranganathan M."/>
            <person name="Basu P."/>
            <person name="Richardson P."/>
        </authorList>
    </citation>
    <scope>NUCLEOTIDE SEQUENCE [LARGE SCALE GENOMIC DNA]</scope>
    <source>
        <strain>OhILAs</strain>
    </source>
</reference>
<sequence>MPNTLVLNGLLILVGILIGCLVGYFFRKNIAEGKISNAEDLAKKIVEDAEKDAETTKKELLLEAKEEVHKLRNELERENRERRNELQRTERRLIQKEEALDKKSETLELKDEKLNKKLKELDNKELEINNLYQKEVEKLEELSGLTSEEARELILSDVEKQTKYEVALMIKDIESKAKEESEKKAREVIAYSIQKCAADHVAETTVSVVQLPSDEMKGRIIGREGRNIRTLETLTGIDLIIDDTPEAVILSGFDPIRREVARIALEKLIVDGRIHPARIEEMVEKARKEVDNIIKEAGEQATFETGVHGLHPELVKLLGRLKYRTSYGQNVLNHSIEVSYLAGIMAAELGADVKLAKRAGLLHDIGKAVDHEIEGTHVEIGMELLKKYKESKDVIHAMSTHHGDYEPESIEAILVTAADAISAARPGARRETLESYIKRLEKLEEIANGHDGVEKSYAIQAGREIRIIVKPEVYNDEEIFMLARNITKKIEFELEYPGQIKVNVIRETRAIEYAK</sequence>
<protein>
    <recommendedName>
        <fullName evidence="1">Ribonuclease Y</fullName>
        <shortName evidence="1">RNase Y</shortName>
        <ecNumber evidence="1">3.1.-.-</ecNumber>
    </recommendedName>
</protein>
<dbReference type="EC" id="3.1.-.-" evidence="1"/>
<dbReference type="EMBL" id="CP000853">
    <property type="protein sequence ID" value="ABW19086.1"/>
    <property type="molecule type" value="Genomic_DNA"/>
</dbReference>
<dbReference type="SMR" id="A8MFC3"/>
<dbReference type="STRING" id="350688.Clos_1543"/>
<dbReference type="KEGG" id="aoe:Clos_1543"/>
<dbReference type="eggNOG" id="COG1418">
    <property type="taxonomic scope" value="Bacteria"/>
</dbReference>
<dbReference type="HOGENOM" id="CLU_028328_1_0_9"/>
<dbReference type="OrthoDB" id="9803205at2"/>
<dbReference type="Proteomes" id="UP000000269">
    <property type="component" value="Chromosome"/>
</dbReference>
<dbReference type="GO" id="GO:0005886">
    <property type="term" value="C:plasma membrane"/>
    <property type="evidence" value="ECO:0007669"/>
    <property type="project" value="UniProtKB-SubCell"/>
</dbReference>
<dbReference type="GO" id="GO:0003723">
    <property type="term" value="F:RNA binding"/>
    <property type="evidence" value="ECO:0007669"/>
    <property type="project" value="UniProtKB-UniRule"/>
</dbReference>
<dbReference type="GO" id="GO:0004521">
    <property type="term" value="F:RNA endonuclease activity"/>
    <property type="evidence" value="ECO:0007669"/>
    <property type="project" value="UniProtKB-UniRule"/>
</dbReference>
<dbReference type="GO" id="GO:0006402">
    <property type="term" value="P:mRNA catabolic process"/>
    <property type="evidence" value="ECO:0007669"/>
    <property type="project" value="UniProtKB-UniRule"/>
</dbReference>
<dbReference type="CDD" id="cd00077">
    <property type="entry name" value="HDc"/>
    <property type="match status" value="1"/>
</dbReference>
<dbReference type="CDD" id="cd22431">
    <property type="entry name" value="KH-I_RNaseY"/>
    <property type="match status" value="1"/>
</dbReference>
<dbReference type="FunFam" id="1.10.3210.10:FF:000003">
    <property type="entry name" value="Ribonuclease Y"/>
    <property type="match status" value="1"/>
</dbReference>
<dbReference type="FunFam" id="3.30.1370.10:FF:000006">
    <property type="entry name" value="Ribonuclease Y"/>
    <property type="match status" value="1"/>
</dbReference>
<dbReference type="Gene3D" id="1.10.3210.10">
    <property type="entry name" value="Hypothetical protein af1432"/>
    <property type="match status" value="1"/>
</dbReference>
<dbReference type="Gene3D" id="3.30.1370.10">
    <property type="entry name" value="K Homology domain, type 1"/>
    <property type="match status" value="1"/>
</dbReference>
<dbReference type="HAMAP" id="MF_00335">
    <property type="entry name" value="RNase_Y"/>
    <property type="match status" value="1"/>
</dbReference>
<dbReference type="InterPro" id="IPR003607">
    <property type="entry name" value="HD/PDEase_dom"/>
</dbReference>
<dbReference type="InterPro" id="IPR006674">
    <property type="entry name" value="HD_domain"/>
</dbReference>
<dbReference type="InterPro" id="IPR006675">
    <property type="entry name" value="HDIG_dom"/>
</dbReference>
<dbReference type="InterPro" id="IPR004087">
    <property type="entry name" value="KH_dom"/>
</dbReference>
<dbReference type="InterPro" id="IPR004088">
    <property type="entry name" value="KH_dom_type_1"/>
</dbReference>
<dbReference type="InterPro" id="IPR036612">
    <property type="entry name" value="KH_dom_type_1_sf"/>
</dbReference>
<dbReference type="InterPro" id="IPR017705">
    <property type="entry name" value="Ribonuclease_Y"/>
</dbReference>
<dbReference type="InterPro" id="IPR022711">
    <property type="entry name" value="RNase_Y_N"/>
</dbReference>
<dbReference type="NCBIfam" id="TIGR00277">
    <property type="entry name" value="HDIG"/>
    <property type="match status" value="1"/>
</dbReference>
<dbReference type="NCBIfam" id="TIGR03319">
    <property type="entry name" value="RNase_Y"/>
    <property type="match status" value="1"/>
</dbReference>
<dbReference type="PANTHER" id="PTHR12826">
    <property type="entry name" value="RIBONUCLEASE Y"/>
    <property type="match status" value="1"/>
</dbReference>
<dbReference type="PANTHER" id="PTHR12826:SF15">
    <property type="entry name" value="RIBONUCLEASE Y"/>
    <property type="match status" value="1"/>
</dbReference>
<dbReference type="Pfam" id="PF01966">
    <property type="entry name" value="HD"/>
    <property type="match status" value="1"/>
</dbReference>
<dbReference type="Pfam" id="PF00013">
    <property type="entry name" value="KH_1"/>
    <property type="match status" value="1"/>
</dbReference>
<dbReference type="Pfam" id="PF12072">
    <property type="entry name" value="RNase_Y_N"/>
    <property type="match status" value="1"/>
</dbReference>
<dbReference type="SMART" id="SM00471">
    <property type="entry name" value="HDc"/>
    <property type="match status" value="1"/>
</dbReference>
<dbReference type="SMART" id="SM00322">
    <property type="entry name" value="KH"/>
    <property type="match status" value="1"/>
</dbReference>
<dbReference type="SUPFAM" id="SSF54791">
    <property type="entry name" value="Eukaryotic type KH-domain (KH-domain type I)"/>
    <property type="match status" value="1"/>
</dbReference>
<dbReference type="SUPFAM" id="SSF109604">
    <property type="entry name" value="HD-domain/PDEase-like"/>
    <property type="match status" value="1"/>
</dbReference>
<dbReference type="PROSITE" id="PS51831">
    <property type="entry name" value="HD"/>
    <property type="match status" value="1"/>
</dbReference>
<dbReference type="PROSITE" id="PS50084">
    <property type="entry name" value="KH_TYPE_1"/>
    <property type="match status" value="1"/>
</dbReference>
<accession>A8MFC3</accession>
<organism>
    <name type="scientific">Alkaliphilus oremlandii (strain OhILAs)</name>
    <name type="common">Clostridium oremlandii (strain OhILAs)</name>
    <dbReference type="NCBI Taxonomy" id="350688"/>
    <lineage>
        <taxon>Bacteria</taxon>
        <taxon>Bacillati</taxon>
        <taxon>Bacillota</taxon>
        <taxon>Clostridia</taxon>
        <taxon>Peptostreptococcales</taxon>
        <taxon>Natronincolaceae</taxon>
        <taxon>Alkaliphilus</taxon>
    </lineage>
</organism>
<feature type="chain" id="PRO_0000344809" description="Ribonuclease Y">
    <location>
        <begin position="1"/>
        <end position="515"/>
    </location>
</feature>
<feature type="transmembrane region" description="Helical" evidence="1">
    <location>
        <begin position="6"/>
        <end position="26"/>
    </location>
</feature>
<feature type="domain" description="KH" evidence="1">
    <location>
        <begin position="205"/>
        <end position="290"/>
    </location>
</feature>
<feature type="domain" description="HD" evidence="2">
    <location>
        <begin position="331"/>
        <end position="424"/>
    </location>
</feature>
<gene>
    <name evidence="1" type="primary">rny</name>
    <name type="ordered locus">Clos_1543</name>
</gene>
<name>RNY_ALKOO</name>
<keyword id="KW-1003">Cell membrane</keyword>
<keyword id="KW-0255">Endonuclease</keyword>
<keyword id="KW-0378">Hydrolase</keyword>
<keyword id="KW-0472">Membrane</keyword>
<keyword id="KW-0540">Nuclease</keyword>
<keyword id="KW-1185">Reference proteome</keyword>
<keyword id="KW-0694">RNA-binding</keyword>
<keyword id="KW-0812">Transmembrane</keyword>
<keyword id="KW-1133">Transmembrane helix</keyword>
<evidence type="ECO:0000255" key="1">
    <source>
        <dbReference type="HAMAP-Rule" id="MF_00335"/>
    </source>
</evidence>
<evidence type="ECO:0000255" key="2">
    <source>
        <dbReference type="PROSITE-ProRule" id="PRU01175"/>
    </source>
</evidence>